<keyword id="KW-0010">Activator</keyword>
<keyword id="KW-0067">ATP-binding</keyword>
<keyword id="KW-0238">DNA-binding</keyword>
<keyword id="KW-0347">Helicase</keyword>
<keyword id="KW-0378">Hydrolase</keyword>
<keyword id="KW-0547">Nucleotide-binding</keyword>
<keyword id="KW-1185">Reference proteome</keyword>
<keyword id="KW-0804">Transcription</keyword>
<keyword id="KW-0805">Transcription regulation</keyword>
<keyword id="KW-0946">Virion</keyword>
<gene>
    <name type="primary">OPG118</name>
    <name type="synonym">VETFS</name>
    <name type="ORF">D6R</name>
</gene>
<organismHost>
    <name type="scientific">Homo sapiens</name>
    <name type="common">Human</name>
    <dbReference type="NCBI Taxonomy" id="9606"/>
</organismHost>
<reference key="1">
    <citation type="journal article" date="1993" name="Virus Res.">
        <title>Nucleotide sequence analysis of variola virus HindIII M, L, I genome fragments.</title>
        <authorList>
            <person name="Shchelkunov S.N."/>
            <person name="Blinov V.M."/>
            <person name="Totmenin A.V."/>
            <person name="Marennikova S.S."/>
            <person name="Kolykhalov A.A."/>
            <person name="Frolov I.V."/>
            <person name="Chizhikov V.E."/>
            <person name="Gytorov V.V."/>
            <person name="Gashikov P.V."/>
            <person name="Belanov E.F."/>
            <person name="Belavin P.A."/>
            <person name="Resenchuk S.M."/>
            <person name="Andzhaparidze O.G."/>
            <person name="Sandakhchiev L.S."/>
        </authorList>
    </citation>
    <scope>NUCLEOTIDE SEQUENCE [GENOMIC DNA]</scope>
</reference>
<reference key="2">
    <citation type="journal article" date="1993" name="FEBS Lett.">
        <title>Genes of variola and vaccinia viruses necessary to overcome the host protective mechanisms.</title>
        <authorList>
            <person name="Shchelkunov S.N."/>
            <person name="Blinov V.M."/>
            <person name="Sandakhchiev L.S."/>
        </authorList>
    </citation>
    <scope>NUCLEOTIDE SEQUENCE [GENOMIC DNA]</scope>
</reference>
<evidence type="ECO:0000250" key="1">
    <source>
        <dbReference type="UniProtKB" id="P04308"/>
    </source>
</evidence>
<evidence type="ECO:0000255" key="2">
    <source>
        <dbReference type="PROSITE-ProRule" id="PRU00541"/>
    </source>
</evidence>
<evidence type="ECO:0000255" key="3">
    <source>
        <dbReference type="PROSITE-ProRule" id="PRU00542"/>
    </source>
</evidence>
<evidence type="ECO:0000305" key="4"/>
<organism>
    <name type="scientific">Variola virus (isolate Human/India/Ind3/1967)</name>
    <name type="common">VARV</name>
    <name type="synonym">Smallpox virus</name>
    <dbReference type="NCBI Taxonomy" id="587200"/>
    <lineage>
        <taxon>Viruses</taxon>
        <taxon>Varidnaviria</taxon>
        <taxon>Bamfordvirae</taxon>
        <taxon>Nucleocytoviricota</taxon>
        <taxon>Pokkesviricetes</taxon>
        <taxon>Chitovirales</taxon>
        <taxon>Poxviridae</taxon>
        <taxon>Chordopoxvirinae</taxon>
        <taxon>Orthopoxvirus</taxon>
        <taxon>Variola virus</taxon>
    </lineage>
</organism>
<protein>
    <recommendedName>
        <fullName>Early transcription factor 70 kDa subunit</fullName>
        <ecNumber>3.6.4.-</ecNumber>
    </recommendedName>
    <alternativeName>
        <fullName>ATP-dependent helicase VETFS</fullName>
    </alternativeName>
    <alternativeName>
        <fullName>ETF small subunit</fullName>
    </alternativeName>
    <alternativeName>
        <fullName>VETF D6 subunit</fullName>
    </alternativeName>
</protein>
<sequence>MNTGIIDLFDNHVDSIPTILPHQLATLDYLVRTIIDENRSVLLFHIMGSGKTIIALLFALIASRFKKVHILVPNINILKIFNYNMGVAMNLFNDEFIAENIFIHSTTSFYSLNYNDNVINYNGLSRYNNSIFIVDEAHNIFGNNTGELMTVIKNKNKIPFLLLSGSPITNTPNTLGHIIDLMSEETIDFGEIISRGKKVIQTLLNERGVNVLKDLLKGRISYYEMPDKDLPTIRYHGRKFLDTRVVYCHMSKLQERDYMITRRQLCYHEMFDKNMYNVSMAVLGQLNLMNNLDTLFQEQDKELYPNLKINNGVLYGEELVTLNISSKFKYFINRIQTLNGKHFIYFSNSTYGGLVIKYIMLSNGYSEYNGSQGTNPHMINGKPKTFAIVTSKMKSSLEDLLDVYNSPENDDGSQLMFLFSSNIMSESYTLKEVRHIWFMTIPDTFSQYNQILGRSIRKFSYVDISEPVNVYLLAAVYSDFNDEVTSLNDYTQDELINVLPFDIKKLLYLKFKTKETNRIYSILQEMSETYSLPPHPSIVKVLLGELVRQFFYNNSRIKYNDAKLLKMVTSVIKNKEDARNYIDDIVNGHFFVSNKVFDKSLLYKYENDIITVPFRLSYEPFVWGVNFRKEYNVVSSP</sequence>
<accession>P0DON9</accession>
<accession>P33056</accession>
<accession>Q9QNI6</accession>
<proteinExistence type="inferred from homology"/>
<name>ETF1_VAR67</name>
<feature type="chain" id="PRO_0000099072" description="Early transcription factor 70 kDa subunit">
    <location>
        <begin position="1"/>
        <end position="637"/>
    </location>
</feature>
<feature type="domain" description="Helicase ATP-binding" evidence="2">
    <location>
        <begin position="32"/>
        <end position="185"/>
    </location>
</feature>
<feature type="domain" description="Helicase C-terminal" evidence="3">
    <location>
        <begin position="327"/>
        <end position="507"/>
    </location>
</feature>
<feature type="short sequence motif" description="DEXH box">
    <location>
        <begin position="135"/>
        <end position="138"/>
    </location>
</feature>
<feature type="binding site" evidence="2">
    <location>
        <begin position="45"/>
        <end position="52"/>
    </location>
    <ligand>
        <name>ATP</name>
        <dbReference type="ChEBI" id="CHEBI:30616"/>
    </ligand>
</feature>
<comment type="function">
    <text evidence="1">Acts with RNA polymerase to initiate transcription from early gene promoters. Is recruited by the RPO-associated protein of 94 kDa RAP94/OPG109 to form the early transcription complex, which also contains the core RNA polymerase. ETF heterodimer binds to early gene promoters.</text>
</comment>
<comment type="subunit">
    <text evidence="1">Heterodimer of a 70 kDa and a 82 kDa subunit. Part of the early transcription complex composed of ETF, RAP94/OPG109, and the DNA-directed RNA polymerase.</text>
</comment>
<comment type="subcellular location">
    <subcellularLocation>
        <location evidence="1">Virion</location>
    </subcellularLocation>
    <text evidence="1">All the enzymes and other proteins required to synthesize early mRNAs are packaged within the virion core along with the DNA genome. This is necessary because viral early mRNAs are synthesized within minutes after virus entry into the cell and are extruded through pores in the core particle.</text>
</comment>
<comment type="similarity">
    <text evidence="4">Belongs to the helicase family. VETF subfamily.</text>
</comment>
<dbReference type="EC" id="3.6.4.-"/>
<dbReference type="EMBL" id="X67119">
    <property type="protein sequence ID" value="CAA47595.1"/>
    <property type="molecule type" value="Genomic_DNA"/>
</dbReference>
<dbReference type="EMBL" id="X69198">
    <property type="protein sequence ID" value="CAA49037.1"/>
    <property type="molecule type" value="Genomic_DNA"/>
</dbReference>
<dbReference type="PIR" id="C36847">
    <property type="entry name" value="C36847"/>
</dbReference>
<dbReference type="SMR" id="P0DON9"/>
<dbReference type="KEGG" id="vg:1486422"/>
<dbReference type="Proteomes" id="UP000002060">
    <property type="component" value="Segment"/>
</dbReference>
<dbReference type="GO" id="GO:0044423">
    <property type="term" value="C:virion component"/>
    <property type="evidence" value="ECO:0007669"/>
    <property type="project" value="UniProtKB-KW"/>
</dbReference>
<dbReference type="GO" id="GO:0005524">
    <property type="term" value="F:ATP binding"/>
    <property type="evidence" value="ECO:0007669"/>
    <property type="project" value="UniProtKB-KW"/>
</dbReference>
<dbReference type="GO" id="GO:0003677">
    <property type="term" value="F:DNA binding"/>
    <property type="evidence" value="ECO:0007669"/>
    <property type="project" value="UniProtKB-KW"/>
</dbReference>
<dbReference type="GO" id="GO:0004386">
    <property type="term" value="F:helicase activity"/>
    <property type="evidence" value="ECO:0007669"/>
    <property type="project" value="UniProtKB-KW"/>
</dbReference>
<dbReference type="GO" id="GO:0016787">
    <property type="term" value="F:hydrolase activity"/>
    <property type="evidence" value="ECO:0007669"/>
    <property type="project" value="UniProtKB-KW"/>
</dbReference>
<dbReference type="CDD" id="cd18785">
    <property type="entry name" value="SF2_C"/>
    <property type="match status" value="1"/>
</dbReference>
<dbReference type="FunFam" id="3.40.50.300:FF:001785">
    <property type="entry name" value="Early gene transcription factor VETF small subunit"/>
    <property type="match status" value="1"/>
</dbReference>
<dbReference type="Gene3D" id="3.40.50.300">
    <property type="entry name" value="P-loop containing nucleotide triphosphate hydrolases"/>
    <property type="match status" value="2"/>
</dbReference>
<dbReference type="InterPro" id="IPR002464">
    <property type="entry name" value="DNA/RNA_helicase_DEAH_CS"/>
</dbReference>
<dbReference type="InterPro" id="IPR006935">
    <property type="entry name" value="Helicase/UvrB_N"/>
</dbReference>
<dbReference type="InterPro" id="IPR014001">
    <property type="entry name" value="Helicase_ATP-bd"/>
</dbReference>
<dbReference type="InterPro" id="IPR001650">
    <property type="entry name" value="Helicase_C-like"/>
</dbReference>
<dbReference type="InterPro" id="IPR027417">
    <property type="entry name" value="P-loop_NTPase"/>
</dbReference>
<dbReference type="Pfam" id="PF00271">
    <property type="entry name" value="Helicase_C"/>
    <property type="match status" value="1"/>
</dbReference>
<dbReference type="Pfam" id="PF04851">
    <property type="entry name" value="ResIII"/>
    <property type="match status" value="1"/>
</dbReference>
<dbReference type="SMART" id="SM00487">
    <property type="entry name" value="DEXDc"/>
    <property type="match status" value="1"/>
</dbReference>
<dbReference type="SMART" id="SM00490">
    <property type="entry name" value="HELICc"/>
    <property type="match status" value="1"/>
</dbReference>
<dbReference type="SUPFAM" id="SSF52540">
    <property type="entry name" value="P-loop containing nucleoside triphosphate hydrolases"/>
    <property type="match status" value="1"/>
</dbReference>
<dbReference type="PROSITE" id="PS00690">
    <property type="entry name" value="DEAH_ATP_HELICASE"/>
    <property type="match status" value="1"/>
</dbReference>
<dbReference type="PROSITE" id="PS51192">
    <property type="entry name" value="HELICASE_ATP_BIND_1"/>
    <property type="match status" value="1"/>
</dbReference>
<dbReference type="PROSITE" id="PS51194">
    <property type="entry name" value="HELICASE_CTER"/>
    <property type="match status" value="1"/>
</dbReference>